<accession>Q558W0</accession>
<accession>Q6XUX4</accession>
<protein>
    <recommendedName>
        <fullName>HIT domain-containing protein DDB_G0272839</fullName>
    </recommendedName>
</protein>
<proteinExistence type="evidence at transcript level"/>
<gene>
    <name type="ORF">DDB_G0272839</name>
</gene>
<comment type="caution">
    <text evidence="3">In contrast to other HIT domain proteins, lacks the conserved histidine triad motif (HXHXH), suggesting it has no hydrolase activity.</text>
</comment>
<organism>
    <name type="scientific">Dictyostelium discoideum</name>
    <name type="common">Social amoeba</name>
    <dbReference type="NCBI Taxonomy" id="44689"/>
    <lineage>
        <taxon>Eukaryota</taxon>
        <taxon>Amoebozoa</taxon>
        <taxon>Evosea</taxon>
        <taxon>Eumycetozoa</taxon>
        <taxon>Dictyostelia</taxon>
        <taxon>Dictyosteliales</taxon>
        <taxon>Dictyosteliaceae</taxon>
        <taxon>Dictyostelium</taxon>
    </lineage>
</organism>
<keyword id="KW-1185">Reference proteome</keyword>
<name>Y2839_DICDI</name>
<dbReference type="EMBL" id="AY208849">
    <property type="protein sequence ID" value="AAP86339.1"/>
    <property type="molecule type" value="mRNA"/>
</dbReference>
<dbReference type="EMBL" id="AAFI02000008">
    <property type="protein sequence ID" value="EAL71057.1"/>
    <property type="molecule type" value="Genomic_DNA"/>
</dbReference>
<dbReference type="RefSeq" id="XP_644956.1">
    <property type="nucleotide sequence ID" value="XM_639864.1"/>
</dbReference>
<dbReference type="SMR" id="Q558W0"/>
<dbReference type="FunCoup" id="Q558W0">
    <property type="interactions" value="444"/>
</dbReference>
<dbReference type="STRING" id="44689.Q558W0"/>
<dbReference type="PaxDb" id="44689-DDB0201560"/>
<dbReference type="EnsemblProtists" id="EAL71057">
    <property type="protein sequence ID" value="EAL71057"/>
    <property type="gene ID" value="DDB_G0272839"/>
</dbReference>
<dbReference type="GeneID" id="8618634"/>
<dbReference type="KEGG" id="ddi:DDB_G0272839"/>
<dbReference type="dictyBase" id="DDB_G0272839"/>
<dbReference type="VEuPathDB" id="AmoebaDB:DDB_G0272839"/>
<dbReference type="eggNOG" id="KOG0562">
    <property type="taxonomic scope" value="Eukaryota"/>
</dbReference>
<dbReference type="HOGENOM" id="CLU_708682_0_0_1"/>
<dbReference type="InParanoid" id="Q558W0"/>
<dbReference type="OMA" id="GCIHIND"/>
<dbReference type="PRO" id="PR:Q558W0"/>
<dbReference type="Proteomes" id="UP000002195">
    <property type="component" value="Chromosome 2"/>
</dbReference>
<dbReference type="GO" id="GO:0005634">
    <property type="term" value="C:nucleus"/>
    <property type="evidence" value="ECO:0000318"/>
    <property type="project" value="GO_Central"/>
</dbReference>
<dbReference type="GO" id="GO:0033699">
    <property type="term" value="F:DNA 5'-adenosine monophosphate hydrolase activity"/>
    <property type="evidence" value="ECO:0000318"/>
    <property type="project" value="GO_Central"/>
</dbReference>
<dbReference type="GO" id="GO:0003725">
    <property type="term" value="F:double-stranded RNA binding"/>
    <property type="evidence" value="ECO:0000318"/>
    <property type="project" value="GO_Central"/>
</dbReference>
<dbReference type="GO" id="GO:0030983">
    <property type="term" value="F:mismatched DNA binding"/>
    <property type="evidence" value="ECO:0000318"/>
    <property type="project" value="GO_Central"/>
</dbReference>
<dbReference type="GO" id="GO:1990165">
    <property type="term" value="F:single-strand break-containing DNA binding"/>
    <property type="evidence" value="ECO:0000318"/>
    <property type="project" value="GO_Central"/>
</dbReference>
<dbReference type="GO" id="GO:0003697">
    <property type="term" value="F:single-stranded DNA binding"/>
    <property type="evidence" value="ECO:0000318"/>
    <property type="project" value="GO_Central"/>
</dbReference>
<dbReference type="GO" id="GO:0000012">
    <property type="term" value="P:single strand break repair"/>
    <property type="evidence" value="ECO:0000318"/>
    <property type="project" value="GO_Central"/>
</dbReference>
<dbReference type="CDD" id="cd01278">
    <property type="entry name" value="aprataxin_related"/>
    <property type="match status" value="1"/>
</dbReference>
<dbReference type="FunFam" id="3.30.428.10:FF:000004">
    <property type="entry name" value="aprataxin isoform X2"/>
    <property type="match status" value="1"/>
</dbReference>
<dbReference type="Gene3D" id="3.30.428.10">
    <property type="entry name" value="HIT-like"/>
    <property type="match status" value="1"/>
</dbReference>
<dbReference type="InterPro" id="IPR011146">
    <property type="entry name" value="HIT-like"/>
</dbReference>
<dbReference type="InterPro" id="IPR036265">
    <property type="entry name" value="HIT-like_sf"/>
</dbReference>
<dbReference type="PANTHER" id="PTHR12486:SF4">
    <property type="entry name" value="APRATAXIN"/>
    <property type="match status" value="1"/>
</dbReference>
<dbReference type="PANTHER" id="PTHR12486">
    <property type="entry name" value="APRATAXIN-RELATED"/>
    <property type="match status" value="1"/>
</dbReference>
<dbReference type="Pfam" id="PF11969">
    <property type="entry name" value="DcpS_C"/>
    <property type="match status" value="1"/>
</dbReference>
<dbReference type="SUPFAM" id="SSF54197">
    <property type="entry name" value="HIT-like"/>
    <property type="match status" value="1"/>
</dbReference>
<dbReference type="PROSITE" id="PS51084">
    <property type="entry name" value="HIT_2"/>
    <property type="match status" value="1"/>
</dbReference>
<reference key="1">
    <citation type="submission" date="2002-12" db="EMBL/GenBank/DDBJ databases">
        <title>Identification of a putative gene in slime mold with homology to the human FHA-HIT gene.</title>
        <authorList>
            <person name="Chen Y."/>
            <person name="Huang C.-H."/>
        </authorList>
    </citation>
    <scope>NUCLEOTIDE SEQUENCE [MRNA]</scope>
</reference>
<reference key="2">
    <citation type="journal article" date="2002" name="Nature">
        <title>Sequence and analysis of chromosome 2 of Dictyostelium discoideum.</title>
        <authorList>
            <person name="Gloeckner G."/>
            <person name="Eichinger L."/>
            <person name="Szafranski K."/>
            <person name="Pachebat J.A."/>
            <person name="Bankier A.T."/>
            <person name="Dear P.H."/>
            <person name="Lehmann R."/>
            <person name="Baumgart C."/>
            <person name="Parra G."/>
            <person name="Abril J.F."/>
            <person name="Guigo R."/>
            <person name="Kumpf K."/>
            <person name="Tunggal B."/>
            <person name="Cox E.C."/>
            <person name="Quail M.A."/>
            <person name="Platzer M."/>
            <person name="Rosenthal A."/>
            <person name="Noegel A.A."/>
        </authorList>
    </citation>
    <scope>NUCLEOTIDE SEQUENCE [LARGE SCALE GENOMIC DNA]</scope>
    <source>
        <strain>AX4</strain>
    </source>
</reference>
<reference key="3">
    <citation type="journal article" date="2005" name="Nature">
        <title>The genome of the social amoeba Dictyostelium discoideum.</title>
        <authorList>
            <person name="Eichinger L."/>
            <person name="Pachebat J.A."/>
            <person name="Gloeckner G."/>
            <person name="Rajandream M.A."/>
            <person name="Sucgang R."/>
            <person name="Berriman M."/>
            <person name="Song J."/>
            <person name="Olsen R."/>
            <person name="Szafranski K."/>
            <person name="Xu Q."/>
            <person name="Tunggal B."/>
            <person name="Kummerfeld S."/>
            <person name="Madera M."/>
            <person name="Konfortov B.A."/>
            <person name="Rivero F."/>
            <person name="Bankier A.T."/>
            <person name="Lehmann R."/>
            <person name="Hamlin N."/>
            <person name="Davies R."/>
            <person name="Gaudet P."/>
            <person name="Fey P."/>
            <person name="Pilcher K."/>
            <person name="Chen G."/>
            <person name="Saunders D."/>
            <person name="Sodergren E.J."/>
            <person name="Davis P."/>
            <person name="Kerhornou A."/>
            <person name="Nie X."/>
            <person name="Hall N."/>
            <person name="Anjard C."/>
            <person name="Hemphill L."/>
            <person name="Bason N."/>
            <person name="Farbrother P."/>
            <person name="Desany B."/>
            <person name="Just E."/>
            <person name="Morio T."/>
            <person name="Rost R."/>
            <person name="Churcher C.M."/>
            <person name="Cooper J."/>
            <person name="Haydock S."/>
            <person name="van Driessche N."/>
            <person name="Cronin A."/>
            <person name="Goodhead I."/>
            <person name="Muzny D.M."/>
            <person name="Mourier T."/>
            <person name="Pain A."/>
            <person name="Lu M."/>
            <person name="Harper D."/>
            <person name="Lindsay R."/>
            <person name="Hauser H."/>
            <person name="James K.D."/>
            <person name="Quiles M."/>
            <person name="Madan Babu M."/>
            <person name="Saito T."/>
            <person name="Buchrieser C."/>
            <person name="Wardroper A."/>
            <person name="Felder M."/>
            <person name="Thangavelu M."/>
            <person name="Johnson D."/>
            <person name="Knights A."/>
            <person name="Loulseged H."/>
            <person name="Mungall K.L."/>
            <person name="Oliver K."/>
            <person name="Price C."/>
            <person name="Quail M.A."/>
            <person name="Urushihara H."/>
            <person name="Hernandez J."/>
            <person name="Rabbinowitsch E."/>
            <person name="Steffen D."/>
            <person name="Sanders M."/>
            <person name="Ma J."/>
            <person name="Kohara Y."/>
            <person name="Sharp S."/>
            <person name="Simmonds M.N."/>
            <person name="Spiegler S."/>
            <person name="Tivey A."/>
            <person name="Sugano S."/>
            <person name="White B."/>
            <person name="Walker D."/>
            <person name="Woodward J.R."/>
            <person name="Winckler T."/>
            <person name="Tanaka Y."/>
            <person name="Shaulsky G."/>
            <person name="Schleicher M."/>
            <person name="Weinstock G.M."/>
            <person name="Rosenthal A."/>
            <person name="Cox E.C."/>
            <person name="Chisholm R.L."/>
            <person name="Gibbs R.A."/>
            <person name="Loomis W.F."/>
            <person name="Platzer M."/>
            <person name="Kay R.R."/>
            <person name="Williams J.G."/>
            <person name="Dear P.H."/>
            <person name="Noegel A.A."/>
            <person name="Barrell B.G."/>
            <person name="Kuspa A."/>
        </authorList>
    </citation>
    <scope>NUCLEOTIDE SEQUENCE [LARGE SCALE GENOMIC DNA]</scope>
    <source>
        <strain>AX4</strain>
    </source>
</reference>
<feature type="chain" id="PRO_0000393722" description="HIT domain-containing protein DDB_G0272839">
    <location>
        <begin position="1"/>
        <end position="390"/>
    </location>
</feature>
<feature type="domain" description="HIT" evidence="1">
    <location>
        <begin position="232"/>
        <end position="343"/>
    </location>
</feature>
<feature type="region of interest" description="Disordered" evidence="2">
    <location>
        <begin position="168"/>
        <end position="201"/>
    </location>
</feature>
<feature type="compositionally biased region" description="Low complexity" evidence="2">
    <location>
        <begin position="184"/>
        <end position="201"/>
    </location>
</feature>
<feature type="sequence conflict" description="In Ref. 1; AAP86339." evidence="3" ref="1">
    <original>H</original>
    <variation>P</variation>
    <location>
        <position position="348"/>
    </location>
</feature>
<evidence type="ECO:0000255" key="1">
    <source>
        <dbReference type="PROSITE-ProRule" id="PRU00464"/>
    </source>
</evidence>
<evidence type="ECO:0000256" key="2">
    <source>
        <dbReference type="SAM" id="MobiDB-lite"/>
    </source>
</evidence>
<evidence type="ECO:0000305" key="3"/>
<sequence length="390" mass="45107">MNFKRLITTSFTNQIKNMKFKKTISFKPFDINNRIIYDKEPTIVFKDQKSCLLKDTISTTLEDGSKELKIKIGRFTPGLDSNNNYISSDIFEININNYSNKIDLCLNGKNPTFLRRKGKIPTKVKNWEQLLGEQLEIRKSVTLEDGDIISFLGLNGTTSSIQFTIEEDNENEKEKEKEMELDNDNTNTESIPPITSKSTSTSTSLIDTNKIQLKKHFEDPNSKNVGLSALVYFCNKPESFLDVVLYYDDKTVAVLDKYPKAKHHYLVIPRVEINTLDELTPSFIPMLEHMYNVADAIINEIISKDNDDDNLKKSDFKLGFHAIPSMKRLHLHIISNDYNTKYLKNNKHWNSFTTEFYIPFDKILNELKSNGKVKVSIKKKIKKNKKKLIH</sequence>